<dbReference type="EC" id="7.-.-.-" evidence="1"/>
<dbReference type="EMBL" id="CP000948">
    <property type="protein sequence ID" value="ACB02835.1"/>
    <property type="molecule type" value="Genomic_DNA"/>
</dbReference>
<dbReference type="RefSeq" id="WP_000915778.1">
    <property type="nucleotide sequence ID" value="NC_010473.1"/>
</dbReference>
<dbReference type="SMR" id="B1XFU1"/>
<dbReference type="KEGG" id="ecd:ECDH10B_1763"/>
<dbReference type="HOGENOM" id="CLU_010808_2_1_6"/>
<dbReference type="GO" id="GO:0005886">
    <property type="term" value="C:plasma membrane"/>
    <property type="evidence" value="ECO:0007669"/>
    <property type="project" value="UniProtKB-SubCell"/>
</dbReference>
<dbReference type="GO" id="GO:0051539">
    <property type="term" value="F:4 iron, 4 sulfur cluster binding"/>
    <property type="evidence" value="ECO:0007669"/>
    <property type="project" value="UniProtKB-KW"/>
</dbReference>
<dbReference type="GO" id="GO:0009055">
    <property type="term" value="F:electron transfer activity"/>
    <property type="evidence" value="ECO:0007669"/>
    <property type="project" value="InterPro"/>
</dbReference>
<dbReference type="GO" id="GO:0046872">
    <property type="term" value="F:metal ion binding"/>
    <property type="evidence" value="ECO:0007669"/>
    <property type="project" value="UniProtKB-KW"/>
</dbReference>
<dbReference type="GO" id="GO:0022900">
    <property type="term" value="P:electron transport chain"/>
    <property type="evidence" value="ECO:0007669"/>
    <property type="project" value="UniProtKB-UniRule"/>
</dbReference>
<dbReference type="Gene3D" id="3.30.70.20">
    <property type="match status" value="1"/>
</dbReference>
<dbReference type="Gene3D" id="3.40.50.11540">
    <property type="entry name" value="NADH-ubiquinone oxidoreductase 51kDa subunit"/>
    <property type="match status" value="1"/>
</dbReference>
<dbReference type="HAMAP" id="MF_00461">
    <property type="entry name" value="RsxC_RnfC"/>
    <property type="match status" value="1"/>
</dbReference>
<dbReference type="InterPro" id="IPR017896">
    <property type="entry name" value="4Fe4S_Fe-S-bd"/>
</dbReference>
<dbReference type="InterPro" id="IPR017900">
    <property type="entry name" value="4Fe4S_Fe_S_CS"/>
</dbReference>
<dbReference type="InterPro" id="IPR010208">
    <property type="entry name" value="Ion_transpt_RnfC/RsxC"/>
</dbReference>
<dbReference type="InterPro" id="IPR011538">
    <property type="entry name" value="Nuo51_FMN-bd"/>
</dbReference>
<dbReference type="InterPro" id="IPR037225">
    <property type="entry name" value="Nuo51_FMN-bd_sf"/>
</dbReference>
<dbReference type="InterPro" id="IPR026902">
    <property type="entry name" value="RnfC_N"/>
</dbReference>
<dbReference type="InterPro" id="IPR019554">
    <property type="entry name" value="Soluble_ligand-bd"/>
</dbReference>
<dbReference type="NCBIfam" id="NF003454">
    <property type="entry name" value="PRK05035.1"/>
    <property type="match status" value="1"/>
</dbReference>
<dbReference type="NCBIfam" id="TIGR01945">
    <property type="entry name" value="rnfC"/>
    <property type="match status" value="1"/>
</dbReference>
<dbReference type="PANTHER" id="PTHR43034">
    <property type="entry name" value="ION-TRANSLOCATING OXIDOREDUCTASE COMPLEX SUBUNIT C"/>
    <property type="match status" value="1"/>
</dbReference>
<dbReference type="PANTHER" id="PTHR43034:SF2">
    <property type="entry name" value="ION-TRANSLOCATING OXIDOREDUCTASE COMPLEX SUBUNIT C"/>
    <property type="match status" value="1"/>
</dbReference>
<dbReference type="Pfam" id="PF01512">
    <property type="entry name" value="Complex1_51K"/>
    <property type="match status" value="1"/>
</dbReference>
<dbReference type="Pfam" id="PF12838">
    <property type="entry name" value="Fer4_7"/>
    <property type="match status" value="1"/>
</dbReference>
<dbReference type="Pfam" id="PF13375">
    <property type="entry name" value="RnfC_N"/>
    <property type="match status" value="1"/>
</dbReference>
<dbReference type="Pfam" id="PF10531">
    <property type="entry name" value="SLBB"/>
    <property type="match status" value="1"/>
</dbReference>
<dbReference type="SUPFAM" id="SSF46548">
    <property type="entry name" value="alpha-helical ferredoxin"/>
    <property type="match status" value="1"/>
</dbReference>
<dbReference type="SUPFAM" id="SSF142019">
    <property type="entry name" value="Nqo1 FMN-binding domain-like"/>
    <property type="match status" value="1"/>
</dbReference>
<dbReference type="PROSITE" id="PS00198">
    <property type="entry name" value="4FE4S_FER_1"/>
    <property type="match status" value="2"/>
</dbReference>
<dbReference type="PROSITE" id="PS51379">
    <property type="entry name" value="4FE4S_FER_2"/>
    <property type="match status" value="2"/>
</dbReference>
<sequence>MLKLFSAFRKNKIWDFNGGIHPPEMKTQSNGTPLRQVPLAQRFVIPLKQHIGAEGELCVSVGDKVLRGQPLTRGRGKMLPVHAPTSGTVTAIAPHSTAHPSALAELSVIIDADGEDCWIPRDGWADYRTRSREELIERIHQFGVAGLGGAGFPTGVKLQGGGDKIETLIINAAECEPYITADDRLMQDCAAQVVEGIRILAHILQPREILIGIEDNKPQAISMLRAVLADSNDISLRVIPTKYPSGGAKQLTYILTGKQVPHGGRSSDIGVLMQNVGTAYAVKRAVIDGEPITERVVTLTGEAIARPGNVWARLGTPVRHLLNDAGFCPSADQMVIMGGPLMGFTLPWLDVPVVKITNCLLAPSANELGEPQEEQSCIRCSACADACPADLLPQQLYWFSKGQQHDKATTHNIADCIECGACAWVCPSNIPLVQYFRQEKAEIAAIRQEEKRAAEAKARFEARQARLEREKAARLERHKSAAVQPAAKDKDAIAAALARVKEKQAQATQPIVIKAGERPDNSAIIAAREARKAQARAKQAELQQTNDAATVADPRKTAVEAAIARAKARKLEQQQANAEPEQQVDPRKAAVEAAIARAKARKLEQQQANAEPEEQVDPRKAAVEAAIARAKARKLEQQQANAEPEQQVDPRKAAVEAAIARAKARKREQQPANAEPEEQVDPRKAAVEAAIARAKARKLEQQQANAVPEEQVDPRKAAVAAAIARAQAKKAAQQKVVNED</sequence>
<organism>
    <name type="scientific">Escherichia coli (strain K12 / DH10B)</name>
    <dbReference type="NCBI Taxonomy" id="316385"/>
    <lineage>
        <taxon>Bacteria</taxon>
        <taxon>Pseudomonadati</taxon>
        <taxon>Pseudomonadota</taxon>
        <taxon>Gammaproteobacteria</taxon>
        <taxon>Enterobacterales</taxon>
        <taxon>Enterobacteriaceae</taxon>
        <taxon>Escherichia</taxon>
    </lineage>
</organism>
<evidence type="ECO:0000255" key="1">
    <source>
        <dbReference type="HAMAP-Rule" id="MF_00461"/>
    </source>
</evidence>
<evidence type="ECO:0000256" key="2">
    <source>
        <dbReference type="SAM" id="MobiDB-lite"/>
    </source>
</evidence>
<protein>
    <recommendedName>
        <fullName evidence="1">Ion-translocating oxidoreductase complex subunit C</fullName>
        <ecNumber evidence="1">7.-.-.-</ecNumber>
    </recommendedName>
    <alternativeName>
        <fullName evidence="1">Rsx electron transport complex subunit C</fullName>
    </alternativeName>
</protein>
<feature type="chain" id="PRO_1000194508" description="Ion-translocating oxidoreductase complex subunit C">
    <location>
        <begin position="1"/>
        <end position="740"/>
    </location>
</feature>
<feature type="domain" description="4Fe-4S ferredoxin-type 1" evidence="1">
    <location>
        <begin position="369"/>
        <end position="397"/>
    </location>
</feature>
<feature type="domain" description="4Fe-4S ferredoxin-type 2" evidence="1">
    <location>
        <begin position="407"/>
        <end position="436"/>
    </location>
</feature>
<feature type="region of interest" description="Disordered" evidence="2">
    <location>
        <begin position="571"/>
        <end position="590"/>
    </location>
</feature>
<feature type="region of interest" description="Disordered" evidence="2">
    <location>
        <begin position="602"/>
        <end position="716"/>
    </location>
</feature>
<feature type="compositionally biased region" description="Low complexity" evidence="2">
    <location>
        <begin position="573"/>
        <end position="583"/>
    </location>
</feature>
<feature type="compositionally biased region" description="Low complexity" evidence="2">
    <location>
        <begin position="637"/>
        <end position="647"/>
    </location>
</feature>
<feature type="binding site" evidence="1">
    <location>
        <position position="377"/>
    </location>
    <ligand>
        <name>[4Fe-4S] cluster</name>
        <dbReference type="ChEBI" id="CHEBI:49883"/>
        <label>1</label>
    </ligand>
</feature>
<feature type="binding site" evidence="1">
    <location>
        <position position="380"/>
    </location>
    <ligand>
        <name>[4Fe-4S] cluster</name>
        <dbReference type="ChEBI" id="CHEBI:49883"/>
        <label>1</label>
    </ligand>
</feature>
<feature type="binding site" evidence="1">
    <location>
        <position position="383"/>
    </location>
    <ligand>
        <name>[4Fe-4S] cluster</name>
        <dbReference type="ChEBI" id="CHEBI:49883"/>
        <label>1</label>
    </ligand>
</feature>
<feature type="binding site" evidence="1">
    <location>
        <position position="387"/>
    </location>
    <ligand>
        <name>[4Fe-4S] cluster</name>
        <dbReference type="ChEBI" id="CHEBI:49883"/>
        <label>2</label>
    </ligand>
</feature>
<feature type="binding site" evidence="1">
    <location>
        <position position="416"/>
    </location>
    <ligand>
        <name>[4Fe-4S] cluster</name>
        <dbReference type="ChEBI" id="CHEBI:49883"/>
        <label>2</label>
    </ligand>
</feature>
<feature type="binding site" evidence="1">
    <location>
        <position position="419"/>
    </location>
    <ligand>
        <name>[4Fe-4S] cluster</name>
        <dbReference type="ChEBI" id="CHEBI:49883"/>
        <label>2</label>
    </ligand>
</feature>
<feature type="binding site" evidence="1">
    <location>
        <position position="422"/>
    </location>
    <ligand>
        <name>[4Fe-4S] cluster</name>
        <dbReference type="ChEBI" id="CHEBI:49883"/>
        <label>2</label>
    </ligand>
</feature>
<feature type="binding site" evidence="1">
    <location>
        <position position="426"/>
    </location>
    <ligand>
        <name>[4Fe-4S] cluster</name>
        <dbReference type="ChEBI" id="CHEBI:49883"/>
        <label>1</label>
    </ligand>
</feature>
<reference key="1">
    <citation type="journal article" date="2008" name="J. Bacteriol.">
        <title>The complete genome sequence of Escherichia coli DH10B: insights into the biology of a laboratory workhorse.</title>
        <authorList>
            <person name="Durfee T."/>
            <person name="Nelson R."/>
            <person name="Baldwin S."/>
            <person name="Plunkett G. III"/>
            <person name="Burland V."/>
            <person name="Mau B."/>
            <person name="Petrosino J.F."/>
            <person name="Qin X."/>
            <person name="Muzny D.M."/>
            <person name="Ayele M."/>
            <person name="Gibbs R.A."/>
            <person name="Csorgo B."/>
            <person name="Posfai G."/>
            <person name="Weinstock G.M."/>
            <person name="Blattner F.R."/>
        </authorList>
    </citation>
    <scope>NUCLEOTIDE SEQUENCE [LARGE SCALE GENOMIC DNA]</scope>
    <source>
        <strain>K12 / DH10B</strain>
    </source>
</reference>
<keyword id="KW-0004">4Fe-4S</keyword>
<keyword id="KW-0997">Cell inner membrane</keyword>
<keyword id="KW-1003">Cell membrane</keyword>
<keyword id="KW-0249">Electron transport</keyword>
<keyword id="KW-0408">Iron</keyword>
<keyword id="KW-0411">Iron-sulfur</keyword>
<keyword id="KW-0472">Membrane</keyword>
<keyword id="KW-0479">Metal-binding</keyword>
<keyword id="KW-0677">Repeat</keyword>
<keyword id="KW-1278">Translocase</keyword>
<keyword id="KW-0813">Transport</keyword>
<comment type="function">
    <text evidence="1">Part of a membrane-bound complex that couples electron transfer with translocation of ions across the membrane. Required to maintain the reduced state of SoxR.</text>
</comment>
<comment type="cofactor">
    <cofactor evidence="1">
        <name>[4Fe-4S] cluster</name>
        <dbReference type="ChEBI" id="CHEBI:49883"/>
    </cofactor>
    <text evidence="1">Binds 2 [4Fe-4S] clusters per subunit.</text>
</comment>
<comment type="subunit">
    <text evidence="1">The complex is composed of six subunits: RsxA, RsxB, RsxC, RsxD, RsxE and RsxG.</text>
</comment>
<comment type="subcellular location">
    <subcellularLocation>
        <location evidence="1">Cell inner membrane</location>
        <topology evidence="1">Peripheral membrane protein</topology>
    </subcellularLocation>
</comment>
<comment type="similarity">
    <text evidence="1">Belongs to the 4Fe4S bacterial-type ferredoxin family. RnfC subfamily.</text>
</comment>
<gene>
    <name evidence="1" type="primary">rsxC</name>
    <name type="ordered locus">ECDH10B_1763</name>
</gene>
<proteinExistence type="inferred from homology"/>
<accession>B1XFU1</accession>
<name>RSXC_ECODH</name>